<feature type="chain" id="PRO_0000216407" description="Cytochrome b6-f complex subunit 5">
    <location>
        <begin position="1"/>
        <end position="37"/>
    </location>
</feature>
<feature type="transmembrane region" description="Helical" evidence="1">
    <location>
        <begin position="5"/>
        <end position="25"/>
    </location>
</feature>
<protein>
    <recommendedName>
        <fullName evidence="1">Cytochrome b6-f complex subunit 5</fullName>
    </recommendedName>
    <alternativeName>
        <fullName evidence="1">Cytochrome b6-f complex subunit PetG</fullName>
    </alternativeName>
    <alternativeName>
        <fullName evidence="1">Cytochrome b6-f complex subunit V</fullName>
    </alternativeName>
</protein>
<evidence type="ECO:0000255" key="1">
    <source>
        <dbReference type="HAMAP-Rule" id="MF_00432"/>
    </source>
</evidence>
<accession>P69463</accession>
<accession>P12121</accession>
<accession>P32973</accession>
<sequence length="37" mass="4170">MIEVFLFGIVLGLIPITLAGLFVTAYLQYRRGDQLDL</sequence>
<comment type="function">
    <text evidence="1">Component of the cytochrome b6-f complex, which mediates electron transfer between photosystem II (PSII) and photosystem I (PSI), cyclic electron flow around PSI, and state transitions. PetG is required for either the stability or assembly of the cytochrome b6-f complex.</text>
</comment>
<comment type="subunit">
    <text evidence="1">The 4 large subunits of the cytochrome b6-f complex are cytochrome b6, subunit IV (17 kDa polypeptide, PetD), cytochrome f and the Rieske protein, while the 4 small subunits are PetG, PetL, PetM and PetN. The complex functions as a dimer.</text>
</comment>
<comment type="subcellular location">
    <subcellularLocation>
        <location evidence="1">Plastid</location>
        <location evidence="1">Chloroplast thylakoid membrane</location>
        <topology evidence="1">Single-pass membrane protein</topology>
    </subcellularLocation>
</comment>
<comment type="similarity">
    <text evidence="1">Belongs to the PetG family.</text>
</comment>
<geneLocation type="chloroplast"/>
<proteinExistence type="inferred from homology"/>
<keyword id="KW-0150">Chloroplast</keyword>
<keyword id="KW-0249">Electron transport</keyword>
<keyword id="KW-0472">Membrane</keyword>
<keyword id="KW-0602">Photosynthesis</keyword>
<keyword id="KW-0934">Plastid</keyword>
<keyword id="KW-1185">Reference proteome</keyword>
<keyword id="KW-0793">Thylakoid</keyword>
<keyword id="KW-0812">Transmembrane</keyword>
<keyword id="KW-1133">Transmembrane helix</keyword>
<keyword id="KW-0813">Transport</keyword>
<gene>
    <name evidence="1" type="primary">petG</name>
</gene>
<name>PETG_WHEAT</name>
<organism>
    <name type="scientific">Triticum aestivum</name>
    <name type="common">Wheat</name>
    <dbReference type="NCBI Taxonomy" id="4565"/>
    <lineage>
        <taxon>Eukaryota</taxon>
        <taxon>Viridiplantae</taxon>
        <taxon>Streptophyta</taxon>
        <taxon>Embryophyta</taxon>
        <taxon>Tracheophyta</taxon>
        <taxon>Spermatophyta</taxon>
        <taxon>Magnoliopsida</taxon>
        <taxon>Liliopsida</taxon>
        <taxon>Poales</taxon>
        <taxon>Poaceae</taxon>
        <taxon>BOP clade</taxon>
        <taxon>Pooideae</taxon>
        <taxon>Triticodae</taxon>
        <taxon>Triticeae</taxon>
        <taxon>Triticinae</taxon>
        <taxon>Triticum</taxon>
    </lineage>
</organism>
<dbReference type="EMBL" id="AB042240">
    <property type="protein sequence ID" value="BAB47052.1"/>
    <property type="molecule type" value="Genomic_DNA"/>
</dbReference>
<dbReference type="RefSeq" id="NP_114277.1">
    <property type="nucleotide sequence ID" value="NC_002762.1"/>
</dbReference>
<dbReference type="SMR" id="P69463"/>
<dbReference type="STRING" id="4565.P69463"/>
<dbReference type="PaxDb" id="4565-EPlTAEP00000010073"/>
<dbReference type="EnsemblPlants" id="TraesARI5D03G02977580.1">
    <property type="protein sequence ID" value="TraesARI5D03G02977580.1.CDS1"/>
    <property type="gene ID" value="TraesARI5D03G02977580"/>
</dbReference>
<dbReference type="EnsemblPlants" id="TraesARI5D03G03076590.1">
    <property type="protein sequence ID" value="TraesARI5D03G03076590.1.CDS1"/>
    <property type="gene ID" value="TraesARI5D03G03076590"/>
</dbReference>
<dbReference type="EnsemblPlants" id="TraesCAD_scaffold_224739_01G000600.1">
    <property type="protein sequence ID" value="TraesCAD_scaffold_224739_01G000600.1"/>
    <property type="gene ID" value="TraesCAD_scaffold_224739_01G000600"/>
</dbReference>
<dbReference type="EnsemblPlants" id="TraesCAD_scaffold_254513_01G000200.1">
    <property type="protein sequence ID" value="TraesCAD_scaffold_254513_01G000200.1"/>
    <property type="gene ID" value="TraesCAD_scaffold_254513_01G000200"/>
</dbReference>
<dbReference type="EnsemblPlants" id="TraesCAD_scaffold_377617_01G000300.1">
    <property type="protein sequence ID" value="TraesCAD_scaffold_377617_01G000300.1"/>
    <property type="gene ID" value="TraesCAD_scaffold_377617_01G000300"/>
</dbReference>
<dbReference type="EnsemblPlants" id="TraesCAD_scaffold_831429_01G000200.1">
    <property type="protein sequence ID" value="TraesCAD_scaffold_831429_01G000200.1"/>
    <property type="gene ID" value="TraesCAD_scaffold_831429_01G000200"/>
</dbReference>
<dbReference type="EnsemblPlants" id="TraesCAD_scaffold_894057_01G000100.1">
    <property type="protein sequence ID" value="TraesCAD_scaffold_894057_01G000100.1"/>
    <property type="gene ID" value="TraesCAD_scaffold_894057_01G000100"/>
</dbReference>
<dbReference type="EnsemblPlants" id="TraesCAD_scaffold_943952_01G000100.1">
    <property type="protein sequence ID" value="TraesCAD_scaffold_943952_01G000100.1"/>
    <property type="gene ID" value="TraesCAD_scaffold_943952_01G000100"/>
</dbReference>
<dbReference type="EnsemblPlants" id="TraesCLE_scaffold_1091791_01G000100.1">
    <property type="protein sequence ID" value="TraesCLE_scaffold_1091791_01G000100.1"/>
    <property type="gene ID" value="TraesCLE_scaffold_1091791_01G000100"/>
</dbReference>
<dbReference type="EnsemblPlants" id="TraesCLE_scaffold_308178_01G000100.1">
    <property type="protein sequence ID" value="TraesCLE_scaffold_308178_01G000100.1"/>
    <property type="gene ID" value="TraesCLE_scaffold_308178_01G000100"/>
</dbReference>
<dbReference type="EnsemblPlants" id="TraesCLE_scaffold_470454_01G000400.1">
    <property type="protein sequence ID" value="TraesCLE_scaffold_470454_01G000400.1"/>
    <property type="gene ID" value="TraesCLE_scaffold_470454_01G000400"/>
</dbReference>
<dbReference type="EnsemblPlants" id="TraesCLE_scaffold_650432_01G000500.1">
    <property type="protein sequence ID" value="TraesCLE_scaffold_650432_01G000500.1"/>
    <property type="gene ID" value="TraesCLE_scaffold_650432_01G000500"/>
</dbReference>
<dbReference type="EnsemblPlants" id="TraesCS1D02G435500.1">
    <property type="protein sequence ID" value="TraesCS1D02G435500.1.cds1"/>
    <property type="gene ID" value="TraesCS1D02G435500"/>
</dbReference>
<dbReference type="EnsemblPlants" id="TraesCS1D03G1000500.1">
    <property type="protein sequence ID" value="TraesCS1D03G1000500.1.CDS1"/>
    <property type="gene ID" value="TraesCS1D03G1000500"/>
</dbReference>
<dbReference type="EnsemblPlants" id="TraesCS2A02G241200.1">
    <property type="protein sequence ID" value="TraesCS2A02G241200.1.cds1"/>
    <property type="gene ID" value="TraesCS2A02G241200"/>
</dbReference>
<dbReference type="EnsemblPlants" id="TraesCS2A03G0561400.1">
    <property type="protein sequence ID" value="TraesCS2A03G0561400.1.CDS1"/>
    <property type="gene ID" value="TraesCS2A03G0561400"/>
</dbReference>
<dbReference type="EnsemblPlants" id="TraesCS3B03G0559900.1">
    <property type="protein sequence ID" value="TraesCS3B03G0559900.1.CDS1"/>
    <property type="gene ID" value="TraesCS3B03G0559900"/>
</dbReference>
<dbReference type="EnsemblPlants" id="TraesCS5D02G009700.1">
    <property type="protein sequence ID" value="TraesCS5D02G009700.1.cds1"/>
    <property type="gene ID" value="TraesCS5D02G009700"/>
</dbReference>
<dbReference type="EnsemblPlants" id="TraesCS5D02G220400.1">
    <property type="protein sequence ID" value="TraesCS5D02G220400.1.cds1"/>
    <property type="gene ID" value="TraesCS5D02G220400"/>
</dbReference>
<dbReference type="EnsemblPlants" id="TraesCS5D02G544600.1">
    <property type="protein sequence ID" value="TraesCS5D02G544600.1.cds1"/>
    <property type="gene ID" value="TraesCS5D02G544600"/>
</dbReference>
<dbReference type="EnsemblPlants" id="TraesCS5D03G0017300.1">
    <property type="protein sequence ID" value="TraesCS5D03G0017300.1.CDS1"/>
    <property type="gene ID" value="TraesCS5D03G0017300"/>
</dbReference>
<dbReference type="EnsemblPlants" id="TraesCS5D03G0515000.1">
    <property type="protein sequence ID" value="TraesCS5D03G0515000.1.CDS1"/>
    <property type="gene ID" value="TraesCS5D03G0515000"/>
</dbReference>
<dbReference type="EnsemblPlants" id="TraesCS5D03G1188000.1">
    <property type="protein sequence ID" value="TraesCS5D03G1188000.1.CDS1"/>
    <property type="gene ID" value="TraesCS5D03G1188000"/>
</dbReference>
<dbReference type="EnsemblPlants" id="TraesCS6D02G326000.1">
    <property type="protein sequence ID" value="TraesCS6D02G326000.1.cds1"/>
    <property type="gene ID" value="TraesCS6D02G326000"/>
</dbReference>
<dbReference type="EnsemblPlants" id="TraesCS6D03G0762900.1">
    <property type="protein sequence ID" value="TraesCS6D03G0762900.1.CDS1"/>
    <property type="gene ID" value="TraesCS6D03G0762900"/>
</dbReference>
<dbReference type="EnsemblPlants" id="TraesCSU02G214200.1">
    <property type="protein sequence ID" value="TraesCSU02G214200.1.cds1"/>
    <property type="gene ID" value="TraesCSU02G214200"/>
</dbReference>
<dbReference type="EnsemblPlants" id="TraesCSU02G258800.1">
    <property type="protein sequence ID" value="TraesCSU02G258800.1.cds1"/>
    <property type="gene ID" value="TraesCSU02G258800"/>
</dbReference>
<dbReference type="EnsemblPlants" id="TraesCSU03G0344700.1">
    <property type="protein sequence ID" value="TraesCSU03G0344700.1.CDS1"/>
    <property type="gene ID" value="TraesCSU03G0344700"/>
</dbReference>
<dbReference type="EnsemblPlants" id="TraesCSU03G0497500.1">
    <property type="protein sequence ID" value="TraesCSU03G0497500.1.CDS1"/>
    <property type="gene ID" value="TraesCSU03G0497500"/>
</dbReference>
<dbReference type="EnsemblPlants" id="TraesJAG2A03G00677850.1">
    <property type="protein sequence ID" value="TraesJAG2A03G00677850.1.CDS1"/>
    <property type="gene ID" value="TraesJAG2A03G00677850"/>
</dbReference>
<dbReference type="EnsemblPlants" id="TraesJAG5D03G03024510.1">
    <property type="protein sequence ID" value="TraesJAG5D03G03024510.1.CDS1"/>
    <property type="gene ID" value="TraesJAG5D03G03024510"/>
</dbReference>
<dbReference type="EnsemblPlants" id="TraesJAG5D03G03120450.1">
    <property type="protein sequence ID" value="TraesJAG5D03G03120450.1.CDS1"/>
    <property type="gene ID" value="TraesJAG5D03G03120450"/>
</dbReference>
<dbReference type="EnsemblPlants" id="TraesJUL5D03G03050160.1">
    <property type="protein sequence ID" value="TraesJUL5D03G03050160.1.CDS1"/>
    <property type="gene ID" value="TraesJUL5D03G03050160"/>
</dbReference>
<dbReference type="EnsemblPlants" id="TraesJUL5D03G03148030.1">
    <property type="protein sequence ID" value="TraesJUL5D03G03148030.1.CDS1"/>
    <property type="gene ID" value="TraesJUL5D03G03148030"/>
</dbReference>
<dbReference type="EnsemblPlants" id="TraesLAC5D03G02981860.1">
    <property type="protein sequence ID" value="TraesLAC5D03G02981860.1.CDS1"/>
    <property type="gene ID" value="TraesLAC5D03G02981860"/>
</dbReference>
<dbReference type="EnsemblPlants" id="TraesLAC5D03G03078880.1">
    <property type="protein sequence ID" value="TraesLAC5D03G03078880.1.CDS1"/>
    <property type="gene ID" value="TraesLAC5D03G03078880"/>
</dbReference>
<dbReference type="EnsemblPlants" id="TraesLDM5D03G03030740.1">
    <property type="protein sequence ID" value="TraesLDM5D03G03030740.1.CDS1"/>
    <property type="gene ID" value="TraesLDM5D03G03030740"/>
</dbReference>
<dbReference type="EnsemblPlants" id="TraesLDM5D03G03127520.1">
    <property type="protein sequence ID" value="TraesLDM5D03G03127520.1.CDS1"/>
    <property type="gene ID" value="TraesLDM5D03G03127520"/>
</dbReference>
<dbReference type="EnsemblPlants" id="TraesMAC5D03G03121690.1">
    <property type="protein sequence ID" value="TraesMAC5D03G03121690.1.CDS1"/>
    <property type="gene ID" value="TraesMAC5D03G03121690"/>
</dbReference>
<dbReference type="EnsemblPlants" id="TraesNOR1D03G00579260.1">
    <property type="protein sequence ID" value="TraesNOR1D03G00579260.1.CDS1"/>
    <property type="gene ID" value="TraesNOR1D03G00579260"/>
</dbReference>
<dbReference type="EnsemblPlants" id="TraesNOR5D03G03060410.1">
    <property type="protein sequence ID" value="TraesNOR5D03G03060410.1.CDS1"/>
    <property type="gene ID" value="TraesNOR5D03G03060410"/>
</dbReference>
<dbReference type="EnsemblPlants" id="TraesNOR5D03G03152570.1">
    <property type="protein sequence ID" value="TraesNOR5D03G03152570.1.CDS1"/>
    <property type="gene ID" value="TraesNOR5D03G03152570"/>
</dbReference>
<dbReference type="EnsemblPlants" id="TraesPARA_EIv1.0_0296420.1">
    <property type="protein sequence ID" value="TraesPARA_EIv1.0_0296420.1.CDS1"/>
    <property type="gene ID" value="TraesPARA_EIv1.0_0296420"/>
</dbReference>
<dbReference type="EnsemblPlants" id="TraesPARA_EIv1.0_0325080.1">
    <property type="protein sequence ID" value="TraesPARA_EIv1.0_0325080.1.CDS1"/>
    <property type="gene ID" value="TraesPARA_EIv1.0_0325080"/>
</dbReference>
<dbReference type="EnsemblPlants" id="TraesPARA_EIv1.0_0408240.1">
    <property type="protein sequence ID" value="TraesPARA_EIv1.0_0408240.1.CDS1"/>
    <property type="gene ID" value="TraesPARA_EIv1.0_0408240"/>
</dbReference>
<dbReference type="EnsemblPlants" id="TraesPARA_EIv1.0_0757220.1">
    <property type="protein sequence ID" value="TraesPARA_EIv1.0_0757220.1.CDS1"/>
    <property type="gene ID" value="TraesPARA_EIv1.0_0757220"/>
</dbReference>
<dbReference type="EnsemblPlants" id="TraesPARA_EIv1.0_0758310.1">
    <property type="protein sequence ID" value="TraesPARA_EIv1.0_0758310.1.CDS1"/>
    <property type="gene ID" value="TraesPARA_EIv1.0_0758310"/>
</dbReference>
<dbReference type="EnsemblPlants" id="TraesPARA_EIv1.0_1762830.1">
    <property type="protein sequence ID" value="TraesPARA_EIv1.0_1762830.1.CDS1"/>
    <property type="gene ID" value="TraesPARA_EIv1.0_1762830"/>
</dbReference>
<dbReference type="EnsemblPlants" id="TraesPARA_EIv1.0_1816380.1">
    <property type="protein sequence ID" value="TraesPARA_EIv1.0_1816380.1.CDS1"/>
    <property type="gene ID" value="TraesPARA_EIv1.0_1816380"/>
</dbReference>
<dbReference type="EnsemblPlants" id="TraesPARA_EIv1.0_2055530.1">
    <property type="protein sequence ID" value="TraesPARA_EIv1.0_2055530.1.CDS1"/>
    <property type="gene ID" value="TraesPARA_EIv1.0_2055530"/>
</dbReference>
<dbReference type="EnsemblPlants" id="TraesPARA_EIv1.0_2643810.1">
    <property type="protein sequence ID" value="TraesPARA_EIv1.0_2643810.1.CDS1"/>
    <property type="gene ID" value="TraesPARA_EIv1.0_2643810"/>
</dbReference>
<dbReference type="EnsemblPlants" id="TraesPARA_EIv1.0_2645900.1">
    <property type="protein sequence ID" value="TraesPARA_EIv1.0_2645900.1.CDS1"/>
    <property type="gene ID" value="TraesPARA_EIv1.0_2645900"/>
</dbReference>
<dbReference type="EnsemblPlants" id="TraesPARA_EIv1.0_2649170.1">
    <property type="protein sequence ID" value="TraesPARA_EIv1.0_2649170.1.CDS1"/>
    <property type="gene ID" value="TraesPARA_EIv1.0_2649170"/>
</dbReference>
<dbReference type="EnsemblPlants" id="TraesPARA_EIv1.0_2681120.1">
    <property type="protein sequence ID" value="TraesPARA_EIv1.0_2681120.1.CDS1"/>
    <property type="gene ID" value="TraesPARA_EIv1.0_2681120"/>
</dbReference>
<dbReference type="EnsemblPlants" id="TraesRN1D0100467500.1">
    <property type="protein sequence ID" value="TraesRN1D0100467500.1"/>
    <property type="gene ID" value="TraesRN1D0100467500"/>
</dbReference>
<dbReference type="EnsemblPlants" id="TraesRN1D0100467600.1">
    <property type="protein sequence ID" value="TraesRN1D0100467600.1"/>
    <property type="gene ID" value="TraesRN1D0100467600"/>
</dbReference>
<dbReference type="EnsemblPlants" id="TraesRN1D0101060800.1">
    <property type="protein sequence ID" value="TraesRN1D0101060800.1"/>
    <property type="gene ID" value="TraesRN1D0101060800"/>
</dbReference>
<dbReference type="EnsemblPlants" id="TraesRN2A0100533600.1">
    <property type="protein sequence ID" value="TraesRN2A0100533600.1"/>
    <property type="gene ID" value="TraesRN2A0100533600"/>
</dbReference>
<dbReference type="EnsemblPlants" id="TraesRN2B0100855800.1">
    <property type="protein sequence ID" value="TraesRN2B0100855800.1"/>
    <property type="gene ID" value="TraesRN2B0100855800"/>
</dbReference>
<dbReference type="EnsemblPlants" id="TraesRN2D0100666800.1">
    <property type="protein sequence ID" value="TraesRN2D0100666800.1"/>
    <property type="gene ID" value="TraesRN2D0100666800"/>
</dbReference>
<dbReference type="EnsemblPlants" id="TraesRN3B0100437700.1">
    <property type="protein sequence ID" value="TraesRN3B0100437700.1"/>
    <property type="gene ID" value="TraesRN3B0100437700"/>
</dbReference>
<dbReference type="EnsemblPlants" id="TraesRN5D0100018700.1">
    <property type="protein sequence ID" value="TraesRN5D0100018700.1"/>
    <property type="gene ID" value="TraesRN5D0100018700"/>
</dbReference>
<dbReference type="EnsemblPlants" id="TraesRN5D0100537400.1">
    <property type="protein sequence ID" value="TraesRN5D0100537400.1"/>
    <property type="gene ID" value="TraesRN5D0100537400"/>
</dbReference>
<dbReference type="EnsemblPlants" id="TraesRN6D0100807200.1">
    <property type="protein sequence ID" value="TraesRN6D0100807200.1"/>
    <property type="gene ID" value="TraesRN6D0100807200"/>
</dbReference>
<dbReference type="EnsemblPlants" id="TraesROB_scaffold_296658_01G000100.1">
    <property type="protein sequence ID" value="TraesROB_scaffold_296658_01G000100.1"/>
    <property type="gene ID" value="TraesROB_scaffold_296658_01G000100"/>
</dbReference>
<dbReference type="EnsemblPlants" id="TraesROB_scaffold_435231_01G000100.1">
    <property type="protein sequence ID" value="TraesROB_scaffold_435231_01G000100.1"/>
    <property type="gene ID" value="TraesROB_scaffold_435231_01G000100"/>
</dbReference>
<dbReference type="EnsemblPlants" id="TraesROB_scaffold_791954_01G000100.1">
    <property type="protein sequence ID" value="TraesROB_scaffold_791954_01G000100.1"/>
    <property type="gene ID" value="TraesROB_scaffold_791954_01G000100"/>
</dbReference>
<dbReference type="EnsemblPlants" id="TraesSTA1D03G00570490.1">
    <property type="protein sequence ID" value="TraesSTA1D03G00570490.1.CDS1"/>
    <property type="gene ID" value="TraesSTA1D03G00570490"/>
</dbReference>
<dbReference type="EnsemblPlants" id="TraesSTA2A03G00674380.1">
    <property type="protein sequence ID" value="TraesSTA2A03G00674380.1.CDS1"/>
    <property type="gene ID" value="TraesSTA2A03G00674380"/>
</dbReference>
<dbReference type="EnsemblPlants" id="TraesSTA2D03G01280470.1">
    <property type="protein sequence ID" value="TraesSTA2D03G01280470.1.CDS1"/>
    <property type="gene ID" value="TraesSTA2D03G01280470"/>
</dbReference>
<dbReference type="EnsemblPlants" id="TraesSTA5D03G03113770.1">
    <property type="protein sequence ID" value="TraesSTA5D03G03113770.1.CDS1"/>
    <property type="gene ID" value="TraesSTA5D03G03113770"/>
</dbReference>
<dbReference type="EnsemblPlants" id="TraesSYM5D03G02965060.1">
    <property type="protein sequence ID" value="TraesSYM5D03G02965060.1.CDS1"/>
    <property type="gene ID" value="TraesSYM5D03G02965060"/>
</dbReference>
<dbReference type="EnsemblPlants" id="TraesSYM5D03G03062890.1">
    <property type="protein sequence ID" value="TraesSYM5D03G03062890.1.CDS1"/>
    <property type="gene ID" value="TraesSYM5D03G03062890"/>
</dbReference>
<dbReference type="EnsemblPlants" id="TraesWEE_scaffold_1267795_01G000100.1">
    <property type="protein sequence ID" value="TraesWEE_scaffold_1267795_01G000100.1"/>
    <property type="gene ID" value="TraesWEE_scaffold_1267795_01G000100"/>
</dbReference>
<dbReference type="EnsemblPlants" id="TraesWEE_scaffold_1328582_01G000200.1">
    <property type="protein sequence ID" value="TraesWEE_scaffold_1328582_01G000200.1"/>
    <property type="gene ID" value="TraesWEE_scaffold_1328582_01G000200"/>
</dbReference>
<dbReference type="EnsemblPlants" id="TraesWEE_scaffold_1350414_01G000100.1">
    <property type="protein sequence ID" value="TraesWEE_scaffold_1350414_01G000100.1"/>
    <property type="gene ID" value="TraesWEE_scaffold_1350414_01G000100"/>
</dbReference>
<dbReference type="EnsemblPlants" id="TraesWEE_scaffold_342588_01G000100.1">
    <property type="protein sequence ID" value="TraesWEE_scaffold_342588_01G000100.1"/>
    <property type="gene ID" value="TraesWEE_scaffold_342588_01G000100"/>
</dbReference>
<dbReference type="EnsemblPlants" id="TraesWEE_scaffold_378716_01G000100.1">
    <property type="protein sequence ID" value="TraesWEE_scaffold_378716_01G000100.1"/>
    <property type="gene ID" value="TraesWEE_scaffold_378716_01G000100"/>
</dbReference>
<dbReference type="EnsemblPlants" id="TraesWEE_scaffold_428345_01G000300.1">
    <property type="protein sequence ID" value="TraesWEE_scaffold_428345_01G000300.1"/>
    <property type="gene ID" value="TraesWEE_scaffold_428345_01G000300"/>
</dbReference>
<dbReference type="EnsemblPlants" id="TraesWEE_scaffold_440283_01G000300.1">
    <property type="protein sequence ID" value="TraesWEE_scaffold_440283_01G000300.1"/>
    <property type="gene ID" value="TraesWEE_scaffold_440283_01G000300"/>
</dbReference>
<dbReference type="EnsemblPlants" id="TraesWEE_scaffold_735287_01G000300.1">
    <property type="protein sequence ID" value="TraesWEE_scaffold_735287_01G000300.1"/>
    <property type="gene ID" value="TraesWEE_scaffold_735287_01G000300"/>
</dbReference>
<dbReference type="GeneID" id="803161"/>
<dbReference type="Gramene" id="TraesARI5D03G02977580.1">
    <property type="protein sequence ID" value="TraesARI5D03G02977580.1.CDS1"/>
    <property type="gene ID" value="TraesARI5D03G02977580"/>
</dbReference>
<dbReference type="Gramene" id="TraesARI5D03G03076590.1">
    <property type="protein sequence ID" value="TraesARI5D03G03076590.1.CDS1"/>
    <property type="gene ID" value="TraesARI5D03G03076590"/>
</dbReference>
<dbReference type="Gramene" id="TraesCAD_scaffold_224739_01G000600.1">
    <property type="protein sequence ID" value="TraesCAD_scaffold_224739_01G000600.1"/>
    <property type="gene ID" value="TraesCAD_scaffold_224739_01G000600"/>
</dbReference>
<dbReference type="Gramene" id="TraesCAD_scaffold_254513_01G000200.1">
    <property type="protein sequence ID" value="TraesCAD_scaffold_254513_01G000200.1"/>
    <property type="gene ID" value="TraesCAD_scaffold_254513_01G000200"/>
</dbReference>
<dbReference type="Gramene" id="TraesCAD_scaffold_377617_01G000300.1">
    <property type="protein sequence ID" value="TraesCAD_scaffold_377617_01G000300.1"/>
    <property type="gene ID" value="TraesCAD_scaffold_377617_01G000300"/>
</dbReference>
<dbReference type="Gramene" id="TraesCAD_scaffold_831429_01G000200.1">
    <property type="protein sequence ID" value="TraesCAD_scaffold_831429_01G000200.1"/>
    <property type="gene ID" value="TraesCAD_scaffold_831429_01G000200"/>
</dbReference>
<dbReference type="Gramene" id="TraesCAD_scaffold_894057_01G000100.1">
    <property type="protein sequence ID" value="TraesCAD_scaffold_894057_01G000100.1"/>
    <property type="gene ID" value="TraesCAD_scaffold_894057_01G000100"/>
</dbReference>
<dbReference type="Gramene" id="TraesCAD_scaffold_943952_01G000100.1">
    <property type="protein sequence ID" value="TraesCAD_scaffold_943952_01G000100.1"/>
    <property type="gene ID" value="TraesCAD_scaffold_943952_01G000100"/>
</dbReference>
<dbReference type="Gramene" id="TraesCLE_scaffold_1091791_01G000100.1">
    <property type="protein sequence ID" value="TraesCLE_scaffold_1091791_01G000100.1"/>
    <property type="gene ID" value="TraesCLE_scaffold_1091791_01G000100"/>
</dbReference>
<dbReference type="Gramene" id="TraesCLE_scaffold_308178_01G000100.1">
    <property type="protein sequence ID" value="TraesCLE_scaffold_308178_01G000100.1"/>
    <property type="gene ID" value="TraesCLE_scaffold_308178_01G000100"/>
</dbReference>
<dbReference type="Gramene" id="TraesCLE_scaffold_470454_01G000400.1">
    <property type="protein sequence ID" value="TraesCLE_scaffold_470454_01G000400.1"/>
    <property type="gene ID" value="TraesCLE_scaffold_470454_01G000400"/>
</dbReference>
<dbReference type="Gramene" id="TraesCLE_scaffold_650432_01G000500.1">
    <property type="protein sequence ID" value="TraesCLE_scaffold_650432_01G000500.1"/>
    <property type="gene ID" value="TraesCLE_scaffold_650432_01G000500"/>
</dbReference>
<dbReference type="Gramene" id="TraesCS1D02G435500.1">
    <property type="protein sequence ID" value="TraesCS1D02G435500.1.cds1"/>
    <property type="gene ID" value="TraesCS1D02G435500"/>
</dbReference>
<dbReference type="Gramene" id="TraesCS1D03G1000500.1">
    <property type="protein sequence ID" value="TraesCS1D03G1000500.1.CDS1"/>
    <property type="gene ID" value="TraesCS1D03G1000500"/>
</dbReference>
<dbReference type="Gramene" id="TraesCS2A02G241200.1">
    <property type="protein sequence ID" value="TraesCS2A02G241200.1.cds1"/>
    <property type="gene ID" value="TraesCS2A02G241200"/>
</dbReference>
<dbReference type="Gramene" id="TraesCS2A03G0561400.1">
    <property type="protein sequence ID" value="TraesCS2A03G0561400.1.CDS1"/>
    <property type="gene ID" value="TraesCS2A03G0561400"/>
</dbReference>
<dbReference type="Gramene" id="TraesCS3B03G0559900.1">
    <property type="protein sequence ID" value="TraesCS3B03G0559900.1.CDS1"/>
    <property type="gene ID" value="TraesCS3B03G0559900"/>
</dbReference>
<dbReference type="Gramene" id="TraesCS5D02G009700.1">
    <property type="protein sequence ID" value="TraesCS5D02G009700.1.cds1"/>
    <property type="gene ID" value="TraesCS5D02G009700"/>
</dbReference>
<dbReference type="Gramene" id="TraesCS5D02G220400.1">
    <property type="protein sequence ID" value="TraesCS5D02G220400.1.cds1"/>
    <property type="gene ID" value="TraesCS5D02G220400"/>
</dbReference>
<dbReference type="Gramene" id="TraesCS5D02G544600.1">
    <property type="protein sequence ID" value="TraesCS5D02G544600.1.cds1"/>
    <property type="gene ID" value="TraesCS5D02G544600"/>
</dbReference>
<dbReference type="Gramene" id="TraesCS5D03G0017300.1">
    <property type="protein sequence ID" value="TraesCS5D03G0017300.1.CDS1"/>
    <property type="gene ID" value="TraesCS5D03G0017300"/>
</dbReference>
<dbReference type="Gramene" id="TraesCS5D03G0515000.1">
    <property type="protein sequence ID" value="TraesCS5D03G0515000.1.CDS1"/>
    <property type="gene ID" value="TraesCS5D03G0515000"/>
</dbReference>
<dbReference type="Gramene" id="TraesCS5D03G1188000.1">
    <property type="protein sequence ID" value="TraesCS5D03G1188000.1.CDS1"/>
    <property type="gene ID" value="TraesCS5D03G1188000"/>
</dbReference>
<dbReference type="Gramene" id="TraesCS6D02G326000.1">
    <property type="protein sequence ID" value="TraesCS6D02G326000.1.cds1"/>
    <property type="gene ID" value="TraesCS6D02G326000"/>
</dbReference>
<dbReference type="Gramene" id="TraesCS6D03G0762900.1">
    <property type="protein sequence ID" value="TraesCS6D03G0762900.1.CDS1"/>
    <property type="gene ID" value="TraesCS6D03G0762900"/>
</dbReference>
<dbReference type="Gramene" id="TraesCSU02G214200.1">
    <property type="protein sequence ID" value="TraesCSU02G214200.1.cds1"/>
    <property type="gene ID" value="TraesCSU02G214200"/>
</dbReference>
<dbReference type="Gramene" id="TraesCSU02G258800.1">
    <property type="protein sequence ID" value="TraesCSU02G258800.1.cds1"/>
    <property type="gene ID" value="TraesCSU02G258800"/>
</dbReference>
<dbReference type="Gramene" id="TraesCSU03G0344700.1">
    <property type="protein sequence ID" value="TraesCSU03G0344700.1.CDS1"/>
    <property type="gene ID" value="TraesCSU03G0344700"/>
</dbReference>
<dbReference type="Gramene" id="TraesCSU03G0497500.1">
    <property type="protein sequence ID" value="TraesCSU03G0497500.1.CDS1"/>
    <property type="gene ID" value="TraesCSU03G0497500"/>
</dbReference>
<dbReference type="Gramene" id="TraesJAG2A03G00677850.1">
    <property type="protein sequence ID" value="TraesJAG2A03G00677850.1.CDS1"/>
    <property type="gene ID" value="TraesJAG2A03G00677850"/>
</dbReference>
<dbReference type="Gramene" id="TraesJAG5D03G03024510.1">
    <property type="protein sequence ID" value="TraesJAG5D03G03024510.1.CDS1"/>
    <property type="gene ID" value="TraesJAG5D03G03024510"/>
</dbReference>
<dbReference type="Gramene" id="TraesJAG5D03G03120450.1">
    <property type="protein sequence ID" value="TraesJAG5D03G03120450.1.CDS1"/>
    <property type="gene ID" value="TraesJAG5D03G03120450"/>
</dbReference>
<dbReference type="Gramene" id="TraesJUL5D03G03050160.1">
    <property type="protein sequence ID" value="TraesJUL5D03G03050160.1.CDS1"/>
    <property type="gene ID" value="TraesJUL5D03G03050160"/>
</dbReference>
<dbReference type="Gramene" id="TraesJUL5D03G03148030.1">
    <property type="protein sequence ID" value="TraesJUL5D03G03148030.1.CDS1"/>
    <property type="gene ID" value="TraesJUL5D03G03148030"/>
</dbReference>
<dbReference type="Gramene" id="TraesLAC5D03G02981860.1">
    <property type="protein sequence ID" value="TraesLAC5D03G02981860.1.CDS1"/>
    <property type="gene ID" value="TraesLAC5D03G02981860"/>
</dbReference>
<dbReference type="Gramene" id="TraesLAC5D03G03078880.1">
    <property type="protein sequence ID" value="TraesLAC5D03G03078880.1.CDS1"/>
    <property type="gene ID" value="TraesLAC5D03G03078880"/>
</dbReference>
<dbReference type="Gramene" id="TraesLDM5D03G03030740.1">
    <property type="protein sequence ID" value="TraesLDM5D03G03030740.1.CDS1"/>
    <property type="gene ID" value="TraesLDM5D03G03030740"/>
</dbReference>
<dbReference type="Gramene" id="TraesLDM5D03G03127520.1">
    <property type="protein sequence ID" value="TraesLDM5D03G03127520.1.CDS1"/>
    <property type="gene ID" value="TraesLDM5D03G03127520"/>
</dbReference>
<dbReference type="Gramene" id="TraesMAC5D03G03121690.1">
    <property type="protein sequence ID" value="TraesMAC5D03G03121690.1.CDS1"/>
    <property type="gene ID" value="TraesMAC5D03G03121690"/>
</dbReference>
<dbReference type="Gramene" id="TraesNOR1D03G00579260.1">
    <property type="protein sequence ID" value="TraesNOR1D03G00579260.1.CDS1"/>
    <property type="gene ID" value="TraesNOR1D03G00579260"/>
</dbReference>
<dbReference type="Gramene" id="TraesNOR5D03G03060410.1">
    <property type="protein sequence ID" value="TraesNOR5D03G03060410.1.CDS1"/>
    <property type="gene ID" value="TraesNOR5D03G03060410"/>
</dbReference>
<dbReference type="Gramene" id="TraesNOR5D03G03152570.1">
    <property type="protein sequence ID" value="TraesNOR5D03G03152570.1.CDS1"/>
    <property type="gene ID" value="TraesNOR5D03G03152570"/>
</dbReference>
<dbReference type="Gramene" id="TraesPARA_EIv1.0_0296420.1">
    <property type="protein sequence ID" value="TraesPARA_EIv1.0_0296420.1.CDS1"/>
    <property type="gene ID" value="TraesPARA_EIv1.0_0296420"/>
</dbReference>
<dbReference type="Gramene" id="TraesPARA_EIv1.0_0325080.1">
    <property type="protein sequence ID" value="TraesPARA_EIv1.0_0325080.1.CDS1"/>
    <property type="gene ID" value="TraesPARA_EIv1.0_0325080"/>
</dbReference>
<dbReference type="Gramene" id="TraesPARA_EIv1.0_0408240.1">
    <property type="protein sequence ID" value="TraesPARA_EIv1.0_0408240.1.CDS1"/>
    <property type="gene ID" value="TraesPARA_EIv1.0_0408240"/>
</dbReference>
<dbReference type="Gramene" id="TraesPARA_EIv1.0_0757220.1">
    <property type="protein sequence ID" value="TraesPARA_EIv1.0_0757220.1.CDS1"/>
    <property type="gene ID" value="TraesPARA_EIv1.0_0757220"/>
</dbReference>
<dbReference type="Gramene" id="TraesPARA_EIv1.0_0758310.1">
    <property type="protein sequence ID" value="TraesPARA_EIv1.0_0758310.1.CDS1"/>
    <property type="gene ID" value="TraesPARA_EIv1.0_0758310"/>
</dbReference>
<dbReference type="Gramene" id="TraesPARA_EIv1.0_1762830.1">
    <property type="protein sequence ID" value="TraesPARA_EIv1.0_1762830.1.CDS1"/>
    <property type="gene ID" value="TraesPARA_EIv1.0_1762830"/>
</dbReference>
<dbReference type="Gramene" id="TraesPARA_EIv1.0_1816380.1">
    <property type="protein sequence ID" value="TraesPARA_EIv1.0_1816380.1.CDS1"/>
    <property type="gene ID" value="TraesPARA_EIv1.0_1816380"/>
</dbReference>
<dbReference type="Gramene" id="TraesPARA_EIv1.0_2055530.1">
    <property type="protein sequence ID" value="TraesPARA_EIv1.0_2055530.1.CDS1"/>
    <property type="gene ID" value="TraesPARA_EIv1.0_2055530"/>
</dbReference>
<dbReference type="Gramene" id="TraesPARA_EIv1.0_2643810.1">
    <property type="protein sequence ID" value="TraesPARA_EIv1.0_2643810.1.CDS1"/>
    <property type="gene ID" value="TraesPARA_EIv1.0_2643810"/>
</dbReference>
<dbReference type="Gramene" id="TraesPARA_EIv1.0_2645900.1">
    <property type="protein sequence ID" value="TraesPARA_EIv1.0_2645900.1.CDS1"/>
    <property type="gene ID" value="TraesPARA_EIv1.0_2645900"/>
</dbReference>
<dbReference type="Gramene" id="TraesPARA_EIv1.0_2649170.1">
    <property type="protein sequence ID" value="TraesPARA_EIv1.0_2649170.1.CDS1"/>
    <property type="gene ID" value="TraesPARA_EIv1.0_2649170"/>
</dbReference>
<dbReference type="Gramene" id="TraesPARA_EIv1.0_2681120.1">
    <property type="protein sequence ID" value="TraesPARA_EIv1.0_2681120.1.CDS1"/>
    <property type="gene ID" value="TraesPARA_EIv1.0_2681120"/>
</dbReference>
<dbReference type="Gramene" id="TraesRN1D0100467500.1">
    <property type="protein sequence ID" value="TraesRN1D0100467500.1"/>
    <property type="gene ID" value="TraesRN1D0100467500"/>
</dbReference>
<dbReference type="Gramene" id="TraesRN1D0100467600.1">
    <property type="protein sequence ID" value="TraesRN1D0100467600.1"/>
    <property type="gene ID" value="TraesRN1D0100467600"/>
</dbReference>
<dbReference type="Gramene" id="TraesRN1D0101060800.1">
    <property type="protein sequence ID" value="TraesRN1D0101060800.1"/>
    <property type="gene ID" value="TraesRN1D0101060800"/>
</dbReference>
<dbReference type="Gramene" id="TraesRN2A0100533600.1">
    <property type="protein sequence ID" value="TraesRN2A0100533600.1"/>
    <property type="gene ID" value="TraesRN2A0100533600"/>
</dbReference>
<dbReference type="Gramene" id="TraesRN2B0100855800.1">
    <property type="protein sequence ID" value="TraesRN2B0100855800.1"/>
    <property type="gene ID" value="TraesRN2B0100855800"/>
</dbReference>
<dbReference type="Gramene" id="TraesRN2D0100666800.1">
    <property type="protein sequence ID" value="TraesRN2D0100666800.1"/>
    <property type="gene ID" value="TraesRN2D0100666800"/>
</dbReference>
<dbReference type="Gramene" id="TraesRN3B0100437700.1">
    <property type="protein sequence ID" value="TraesRN3B0100437700.1"/>
    <property type="gene ID" value="TraesRN3B0100437700"/>
</dbReference>
<dbReference type="Gramene" id="TraesRN5D0100018700.1">
    <property type="protein sequence ID" value="TraesRN5D0100018700.1"/>
    <property type="gene ID" value="TraesRN5D0100018700"/>
</dbReference>
<dbReference type="Gramene" id="TraesRN5D0100537400.1">
    <property type="protein sequence ID" value="TraesRN5D0100537400.1"/>
    <property type="gene ID" value="TraesRN5D0100537400"/>
</dbReference>
<dbReference type="Gramene" id="TraesRN6D0100807200.1">
    <property type="protein sequence ID" value="TraesRN6D0100807200.1"/>
    <property type="gene ID" value="TraesRN6D0100807200"/>
</dbReference>
<dbReference type="Gramene" id="TraesROB_scaffold_296658_01G000100.1">
    <property type="protein sequence ID" value="TraesROB_scaffold_296658_01G000100.1"/>
    <property type="gene ID" value="TraesROB_scaffold_296658_01G000100"/>
</dbReference>
<dbReference type="Gramene" id="TraesROB_scaffold_435231_01G000100.1">
    <property type="protein sequence ID" value="TraesROB_scaffold_435231_01G000100.1"/>
    <property type="gene ID" value="TraesROB_scaffold_435231_01G000100"/>
</dbReference>
<dbReference type="Gramene" id="TraesROB_scaffold_791954_01G000100.1">
    <property type="protein sequence ID" value="TraesROB_scaffold_791954_01G000100.1"/>
    <property type="gene ID" value="TraesROB_scaffold_791954_01G000100"/>
</dbReference>
<dbReference type="Gramene" id="TraesSTA1D03G00570490.1">
    <property type="protein sequence ID" value="TraesSTA1D03G00570490.1.CDS1"/>
    <property type="gene ID" value="TraesSTA1D03G00570490"/>
</dbReference>
<dbReference type="Gramene" id="TraesSTA2A03G00674380.1">
    <property type="protein sequence ID" value="TraesSTA2A03G00674380.1.CDS1"/>
    <property type="gene ID" value="TraesSTA2A03G00674380"/>
</dbReference>
<dbReference type="Gramene" id="TraesSTA2D03G01280470.1">
    <property type="protein sequence ID" value="TraesSTA2D03G01280470.1.CDS1"/>
    <property type="gene ID" value="TraesSTA2D03G01280470"/>
</dbReference>
<dbReference type="Gramene" id="TraesSTA5D03G03113770.1">
    <property type="protein sequence ID" value="TraesSTA5D03G03113770.1.CDS1"/>
    <property type="gene ID" value="TraesSTA5D03G03113770"/>
</dbReference>
<dbReference type="Gramene" id="TraesSYM5D03G02965060.1">
    <property type="protein sequence ID" value="TraesSYM5D03G02965060.1.CDS1"/>
    <property type="gene ID" value="TraesSYM5D03G02965060"/>
</dbReference>
<dbReference type="Gramene" id="TraesSYM5D03G03062890.1">
    <property type="protein sequence ID" value="TraesSYM5D03G03062890.1.CDS1"/>
    <property type="gene ID" value="TraesSYM5D03G03062890"/>
</dbReference>
<dbReference type="Gramene" id="TraesWEE_scaffold_1267795_01G000100.1">
    <property type="protein sequence ID" value="TraesWEE_scaffold_1267795_01G000100.1"/>
    <property type="gene ID" value="TraesWEE_scaffold_1267795_01G000100"/>
</dbReference>
<dbReference type="Gramene" id="TraesWEE_scaffold_1328582_01G000200.1">
    <property type="protein sequence ID" value="TraesWEE_scaffold_1328582_01G000200.1"/>
    <property type="gene ID" value="TraesWEE_scaffold_1328582_01G000200"/>
</dbReference>
<dbReference type="Gramene" id="TraesWEE_scaffold_1350414_01G000100.1">
    <property type="protein sequence ID" value="TraesWEE_scaffold_1350414_01G000100.1"/>
    <property type="gene ID" value="TraesWEE_scaffold_1350414_01G000100"/>
</dbReference>
<dbReference type="Gramene" id="TraesWEE_scaffold_342588_01G000100.1">
    <property type="protein sequence ID" value="TraesWEE_scaffold_342588_01G000100.1"/>
    <property type="gene ID" value="TraesWEE_scaffold_342588_01G000100"/>
</dbReference>
<dbReference type="Gramene" id="TraesWEE_scaffold_378716_01G000100.1">
    <property type="protein sequence ID" value="TraesWEE_scaffold_378716_01G000100.1"/>
    <property type="gene ID" value="TraesWEE_scaffold_378716_01G000100"/>
</dbReference>
<dbReference type="Gramene" id="TraesWEE_scaffold_428345_01G000300.1">
    <property type="protein sequence ID" value="TraesWEE_scaffold_428345_01G000300.1"/>
    <property type="gene ID" value="TraesWEE_scaffold_428345_01G000300"/>
</dbReference>
<dbReference type="Gramene" id="TraesWEE_scaffold_440283_01G000300.1">
    <property type="protein sequence ID" value="TraesWEE_scaffold_440283_01G000300.1"/>
    <property type="gene ID" value="TraesWEE_scaffold_440283_01G000300"/>
</dbReference>
<dbReference type="Gramene" id="TraesWEE_scaffold_735287_01G000300.1">
    <property type="protein sequence ID" value="TraesWEE_scaffold_735287_01G000300.1"/>
    <property type="gene ID" value="TraesWEE_scaffold_735287_01G000300"/>
</dbReference>
<dbReference type="KEGG" id="taes:803161"/>
<dbReference type="eggNOG" id="ENOG502SD3G">
    <property type="taxonomic scope" value="Eukaryota"/>
</dbReference>
<dbReference type="HOGENOM" id="CLU_216962_0_0_1"/>
<dbReference type="OrthoDB" id="35473at2759"/>
<dbReference type="Proteomes" id="UP000019116">
    <property type="component" value="Chloroplast"/>
</dbReference>
<dbReference type="ExpressionAtlas" id="P69463">
    <property type="expression patterns" value="baseline"/>
</dbReference>
<dbReference type="GO" id="GO:0009535">
    <property type="term" value="C:chloroplast thylakoid membrane"/>
    <property type="evidence" value="ECO:0007669"/>
    <property type="project" value="UniProtKB-SubCell"/>
</dbReference>
<dbReference type="GO" id="GO:0009512">
    <property type="term" value="C:cytochrome b6f complex"/>
    <property type="evidence" value="ECO:0007669"/>
    <property type="project" value="InterPro"/>
</dbReference>
<dbReference type="GO" id="GO:0045158">
    <property type="term" value="F:electron transporter, transferring electrons within cytochrome b6/f complex of photosystem II activity"/>
    <property type="evidence" value="ECO:0007669"/>
    <property type="project" value="UniProtKB-UniRule"/>
</dbReference>
<dbReference type="GO" id="GO:0017004">
    <property type="term" value="P:cytochrome complex assembly"/>
    <property type="evidence" value="ECO:0007669"/>
    <property type="project" value="UniProtKB-UniRule"/>
</dbReference>
<dbReference type="GO" id="GO:0015979">
    <property type="term" value="P:photosynthesis"/>
    <property type="evidence" value="ECO:0007669"/>
    <property type="project" value="UniProtKB-KW"/>
</dbReference>
<dbReference type="HAMAP" id="MF_00432">
    <property type="entry name" value="Cytb6_f_PetG"/>
    <property type="match status" value="1"/>
</dbReference>
<dbReference type="InterPro" id="IPR003683">
    <property type="entry name" value="Cyt_6/f_cplx_su5"/>
</dbReference>
<dbReference type="InterPro" id="IPR036099">
    <property type="entry name" value="Cyt_6/f_cplx_su5_sf"/>
</dbReference>
<dbReference type="NCBIfam" id="NF001907">
    <property type="entry name" value="PRK00665.1"/>
    <property type="match status" value="1"/>
</dbReference>
<dbReference type="Pfam" id="PF02529">
    <property type="entry name" value="PetG"/>
    <property type="match status" value="1"/>
</dbReference>
<dbReference type="PIRSF" id="PIRSF000034">
    <property type="entry name" value="Cyt_b6-f_V"/>
    <property type="match status" value="1"/>
</dbReference>
<dbReference type="SUPFAM" id="SSF103446">
    <property type="entry name" value="PetG subunit of the cytochrome b6f complex"/>
    <property type="match status" value="1"/>
</dbReference>
<reference key="1">
    <citation type="journal article" date="2000" name="Plant Mol. Biol. Rep.">
        <title>Chinese spring wheat (Triticum aestivum L.) chloroplast genome: complete sequence and contig clones.</title>
        <authorList>
            <person name="Ogihara Y."/>
            <person name="Isono K."/>
            <person name="Kojima T."/>
            <person name="Endo A."/>
            <person name="Hanaoka M."/>
            <person name="Shiina T."/>
            <person name="Terachi T."/>
            <person name="Utsugi S."/>
            <person name="Murata M."/>
            <person name="Mori N."/>
            <person name="Takumi S."/>
            <person name="Ikeo K."/>
            <person name="Gojobori T."/>
            <person name="Murai R."/>
            <person name="Murai K."/>
            <person name="Matsuoka Y."/>
            <person name="Ohnishi Y."/>
            <person name="Tajiri H."/>
            <person name="Tsunewaki K."/>
        </authorList>
    </citation>
    <scope>NUCLEOTIDE SEQUENCE [LARGE SCALE GENOMIC DNA]</scope>
    <source>
        <strain>cv. Chinese Spring</strain>
    </source>
</reference>